<comment type="function">
    <text evidence="2 3">DNA helicase that loads on single-stranded (ss)DNA and translocates in a 3'-5' direction, probably involved in DNA repair. Archaeal orthologs have double-stranded (ds)DNA and/or RNA:DNA helicase activity.</text>
</comment>
<comment type="catalytic activity">
    <reaction evidence="3">
        <text>Couples ATP hydrolysis with the unwinding of duplex DNA by translocating in the 3'-5' direction.</text>
        <dbReference type="EC" id="5.6.2.4"/>
    </reaction>
</comment>
<comment type="catalytic activity">
    <reaction evidence="3">
        <text>ATP + H2O = ADP + phosphate + H(+)</text>
        <dbReference type="Rhea" id="RHEA:13065"/>
        <dbReference type="ChEBI" id="CHEBI:15377"/>
        <dbReference type="ChEBI" id="CHEBI:15378"/>
        <dbReference type="ChEBI" id="CHEBI:30616"/>
        <dbReference type="ChEBI" id="CHEBI:43474"/>
        <dbReference type="ChEBI" id="CHEBI:456216"/>
        <dbReference type="EC" id="5.6.2.4"/>
    </reaction>
</comment>
<comment type="subunit">
    <text evidence="2">Monomer.</text>
</comment>
<comment type="domain">
    <text evidence="1">Composed of 2 helicase domains, a winged-helix (WH) domain, and Lhr-specific domain 4.</text>
</comment>
<comment type="similarity">
    <text evidence="6">Belongs to the Lhr helicase family. Lhr-Core subfamily.</text>
</comment>
<gene>
    <name type="ordered locus">MJ0294</name>
</gene>
<feature type="chain" id="PRO_0000102196" description="ATP-dependent helicase Lhr-Core">
    <location>
        <begin position="1"/>
        <end position="841"/>
    </location>
</feature>
<feature type="domain" description="Helicase ATP-binding" evidence="4">
    <location>
        <begin position="43"/>
        <end position="234"/>
    </location>
</feature>
<feature type="domain" description="Helicase C-terminal" evidence="5">
    <location>
        <begin position="266"/>
        <end position="416"/>
    </location>
</feature>
<feature type="region of interest" description="WH domain" evidence="1">
    <location>
        <begin position="417"/>
        <end position="500"/>
    </location>
</feature>
<feature type="region of interest" description="Domain 4" evidence="1">
    <location>
        <begin position="501"/>
        <end position="841"/>
    </location>
</feature>
<feature type="short sequence motif" description="DEVH box">
    <location>
        <begin position="181"/>
        <end position="184"/>
    </location>
</feature>
<feature type="binding site" evidence="1">
    <location>
        <position position="39"/>
    </location>
    <ligand>
        <name>ATP</name>
        <dbReference type="ChEBI" id="CHEBI:30616"/>
    </ligand>
</feature>
<feature type="binding site" evidence="1">
    <location>
        <position position="62"/>
    </location>
    <ligand>
        <name>ATP</name>
        <dbReference type="ChEBI" id="CHEBI:30616"/>
    </ligand>
</feature>
<feature type="binding site" evidence="1">
    <location>
        <position position="63"/>
    </location>
    <ligand>
        <name>ATP</name>
        <dbReference type="ChEBI" id="CHEBI:30616"/>
    </ligand>
</feature>
<feature type="binding site" evidence="1">
    <location>
        <position position="181"/>
    </location>
    <ligand>
        <name>ATP</name>
        <dbReference type="ChEBI" id="CHEBI:30616"/>
    </ligand>
</feature>
<feature type="binding site" evidence="1">
    <location>
        <position position="182"/>
    </location>
    <ligand>
        <name>ATP</name>
        <dbReference type="ChEBI" id="CHEBI:30616"/>
    </ligand>
</feature>
<feature type="binding site" evidence="1">
    <location>
        <position position="352"/>
    </location>
    <ligand>
        <name>ATP</name>
        <dbReference type="ChEBI" id="CHEBI:30616"/>
    </ligand>
</feature>
<feature type="binding site" evidence="1">
    <location>
        <position position="369"/>
    </location>
    <ligand>
        <name>ATP</name>
        <dbReference type="ChEBI" id="CHEBI:30616"/>
    </ligand>
</feature>
<feature type="binding site" evidence="1">
    <location>
        <position position="372"/>
    </location>
    <ligand>
        <name>ATP</name>
        <dbReference type="ChEBI" id="CHEBI:30616"/>
    </ligand>
</feature>
<feature type="site" description="Wedges between bases of the loading strand" evidence="1">
    <location>
        <position position="499"/>
    </location>
</feature>
<keyword id="KW-0067">ATP-binding</keyword>
<keyword id="KW-0227">DNA damage</keyword>
<keyword id="KW-0234">DNA repair</keyword>
<keyword id="KW-0238">DNA-binding</keyword>
<keyword id="KW-0347">Helicase</keyword>
<keyword id="KW-0378">Hydrolase</keyword>
<keyword id="KW-0413">Isomerase</keyword>
<keyword id="KW-0547">Nucleotide-binding</keyword>
<keyword id="KW-1185">Reference proteome</keyword>
<sequence>MGRVEYLKKEYSDEEIYEILEKPVKEWFKRKYKTFTPPQRYAIKEIHEGKNVLICSPTGSGKTLSAFLAGINELIKLSMENKLEDRIYILYVSPLRALNNDIERNLKEPLKEIYDVAKEIGIELDEIRVAVRTSDTTSSQKQRMLKKPPHILITTPESLAIALNSPKFSQLLSGIKYVIVDEIHALTNKRGVHLSLSLERLNRIANFIRIGLSATIHPLTEVAKFLVGNGRDCYIVDVSYKKEIEIKVISPVDDFIYTPSEEISKRLYNLLKKLIEEHKTTLIFTNTRSATERVAFYLKQLGVEKVETHHSSLSREHRLEVEEKLKKGEIRVCISSTSLELGVDIGSIDLVILLGSPKSVSRALQRIGRSGHRLHEKSKGIIIPFDRDDLVENVVLAYDAKIGKIDRIHIPKNCLDVLAQHLVGMALEKVWDVDEAYNLIKKAYPYKDLSKKDFLDVLNYLAGGIEEKNVYAKIWLKDNKFGKRGKSVRAIYYMNVGTIPDETAVDVIADGKYVGEVEEEFAEKLMKGDIFVLGGKTYKYLGGRGNKIRVKEVFDEKPTIPAWFSEQLPLAYDLALDIEKFRKEVLSSDIEEIREKYDIDEKTAKAIKNYMDEQNKFAIVPDDEKVLIENFDEEKRRYYIFHFVAGRRANEALARAFANYISKIKKCNVRISVNDYGFALILPKNRKIKRADITELFNLDVVKNVKESIERSEILKRRFRHVATRGFMILRRYMNRKISVDRQQFNAEMLLKYCKEVNHPLYRETLREILEDSLDIDNALDYFEKIKRRKIYYLELPSPSPFAFNLVVSASSDVIFMEDKKKMIAELHKKVMEFISMKGKK</sequence>
<dbReference type="EC" id="5.6.2.4" evidence="3"/>
<dbReference type="EMBL" id="L77117">
    <property type="protein sequence ID" value="AAB98279.1"/>
    <property type="molecule type" value="Genomic_DNA"/>
</dbReference>
<dbReference type="PIR" id="G64336">
    <property type="entry name" value="G64336"/>
</dbReference>
<dbReference type="RefSeq" id="WP_010869792.1">
    <property type="nucleotide sequence ID" value="NC_000909.1"/>
</dbReference>
<dbReference type="SMR" id="Q57742"/>
<dbReference type="FunCoup" id="Q57742">
    <property type="interactions" value="92"/>
</dbReference>
<dbReference type="STRING" id="243232.MJ_0294"/>
<dbReference type="PaxDb" id="243232-MJ_0294"/>
<dbReference type="EnsemblBacteria" id="AAB98279">
    <property type="protein sequence ID" value="AAB98279"/>
    <property type="gene ID" value="MJ_0294"/>
</dbReference>
<dbReference type="GeneID" id="1451149"/>
<dbReference type="KEGG" id="mja:MJ_0294"/>
<dbReference type="eggNOG" id="arCOG00557">
    <property type="taxonomic scope" value="Archaea"/>
</dbReference>
<dbReference type="HOGENOM" id="CLU_002025_0_0_2"/>
<dbReference type="InParanoid" id="Q57742"/>
<dbReference type="OrthoDB" id="372104at2157"/>
<dbReference type="PhylomeDB" id="Q57742"/>
<dbReference type="Proteomes" id="UP000000805">
    <property type="component" value="Chromosome"/>
</dbReference>
<dbReference type="GO" id="GO:0005524">
    <property type="term" value="F:ATP binding"/>
    <property type="evidence" value="ECO:0007669"/>
    <property type="project" value="UniProtKB-KW"/>
</dbReference>
<dbReference type="GO" id="GO:0016887">
    <property type="term" value="F:ATP hydrolysis activity"/>
    <property type="evidence" value="ECO:0000318"/>
    <property type="project" value="GO_Central"/>
</dbReference>
<dbReference type="GO" id="GO:0140097">
    <property type="term" value="F:catalytic activity, acting on DNA"/>
    <property type="evidence" value="ECO:0007669"/>
    <property type="project" value="UniProtKB-ARBA"/>
</dbReference>
<dbReference type="GO" id="GO:0003677">
    <property type="term" value="F:DNA binding"/>
    <property type="evidence" value="ECO:0000318"/>
    <property type="project" value="GO_Central"/>
</dbReference>
<dbReference type="GO" id="GO:0004386">
    <property type="term" value="F:helicase activity"/>
    <property type="evidence" value="ECO:0007669"/>
    <property type="project" value="UniProtKB-KW"/>
</dbReference>
<dbReference type="CDD" id="cd17922">
    <property type="entry name" value="DEXHc_LHR-like"/>
    <property type="match status" value="1"/>
</dbReference>
<dbReference type="CDD" id="cd18796">
    <property type="entry name" value="SF2_C_LHR"/>
    <property type="match status" value="1"/>
</dbReference>
<dbReference type="Gene3D" id="3.40.50.300">
    <property type="entry name" value="P-loop containing nucleotide triphosphate hydrolases"/>
    <property type="match status" value="2"/>
</dbReference>
<dbReference type="InterPro" id="IPR052511">
    <property type="entry name" value="ATP-dep_Helicase"/>
</dbReference>
<dbReference type="InterPro" id="IPR013701">
    <property type="entry name" value="DEAD/DEAH_assoc"/>
</dbReference>
<dbReference type="InterPro" id="IPR011545">
    <property type="entry name" value="DEAD/DEAH_box_helicase_dom"/>
</dbReference>
<dbReference type="InterPro" id="IPR014001">
    <property type="entry name" value="Helicase_ATP-bd"/>
</dbReference>
<dbReference type="InterPro" id="IPR001650">
    <property type="entry name" value="Helicase_C-like"/>
</dbReference>
<dbReference type="InterPro" id="IPR017170">
    <property type="entry name" value="Lhr-like_ATP-dep_RNA_helic_prd"/>
</dbReference>
<dbReference type="InterPro" id="IPR045628">
    <property type="entry name" value="Lhr_WH_dom"/>
</dbReference>
<dbReference type="InterPro" id="IPR027417">
    <property type="entry name" value="P-loop_NTPase"/>
</dbReference>
<dbReference type="NCBIfam" id="NF010338">
    <property type="entry name" value="PRK13767.1"/>
    <property type="match status" value="1"/>
</dbReference>
<dbReference type="PANTHER" id="PTHR47962">
    <property type="entry name" value="ATP-DEPENDENT HELICASE LHR-RELATED-RELATED"/>
    <property type="match status" value="1"/>
</dbReference>
<dbReference type="PANTHER" id="PTHR47962:SF6">
    <property type="entry name" value="LARGE HELICASE-RELATED PROTEIN"/>
    <property type="match status" value="1"/>
</dbReference>
<dbReference type="Pfam" id="PF00270">
    <property type="entry name" value="DEAD"/>
    <property type="match status" value="1"/>
</dbReference>
<dbReference type="Pfam" id="PF08494">
    <property type="entry name" value="DEAD_assoc"/>
    <property type="match status" value="1"/>
</dbReference>
<dbReference type="Pfam" id="PF00271">
    <property type="entry name" value="Helicase_C"/>
    <property type="match status" value="1"/>
</dbReference>
<dbReference type="Pfam" id="PF19306">
    <property type="entry name" value="WH_Lhr"/>
    <property type="match status" value="1"/>
</dbReference>
<dbReference type="PIRSF" id="PIRSF037307">
    <property type="entry name" value="Lhr-like_helic_prd"/>
    <property type="match status" value="1"/>
</dbReference>
<dbReference type="SMART" id="SM00487">
    <property type="entry name" value="DEXDc"/>
    <property type="match status" value="1"/>
</dbReference>
<dbReference type="SMART" id="SM00490">
    <property type="entry name" value="HELICc"/>
    <property type="match status" value="1"/>
</dbReference>
<dbReference type="SUPFAM" id="SSF52540">
    <property type="entry name" value="P-loop containing nucleoside triphosphate hydrolases"/>
    <property type="match status" value="1"/>
</dbReference>
<dbReference type="PROSITE" id="PS51192">
    <property type="entry name" value="HELICASE_ATP_BIND_1"/>
    <property type="match status" value="1"/>
</dbReference>
<dbReference type="PROSITE" id="PS51194">
    <property type="entry name" value="HELICASE_CTER"/>
    <property type="match status" value="1"/>
</dbReference>
<reference key="1">
    <citation type="journal article" date="1996" name="Science">
        <title>Complete genome sequence of the methanogenic archaeon, Methanococcus jannaschii.</title>
        <authorList>
            <person name="Bult C.J."/>
            <person name="White O."/>
            <person name="Olsen G.J."/>
            <person name="Zhou L."/>
            <person name="Fleischmann R.D."/>
            <person name="Sutton G.G."/>
            <person name="Blake J.A."/>
            <person name="FitzGerald L.M."/>
            <person name="Clayton R.A."/>
            <person name="Gocayne J.D."/>
            <person name="Kerlavage A.R."/>
            <person name="Dougherty B.A."/>
            <person name="Tomb J.-F."/>
            <person name="Adams M.D."/>
            <person name="Reich C.I."/>
            <person name="Overbeek R."/>
            <person name="Kirkness E.F."/>
            <person name="Weinstock K.G."/>
            <person name="Merrick J.M."/>
            <person name="Glodek A."/>
            <person name="Scott J.L."/>
            <person name="Geoghagen N.S.M."/>
            <person name="Weidman J.F."/>
            <person name="Fuhrmann J.L."/>
            <person name="Nguyen D."/>
            <person name="Utterback T.R."/>
            <person name="Kelley J.M."/>
            <person name="Peterson J.D."/>
            <person name="Sadow P.W."/>
            <person name="Hanna M.C."/>
            <person name="Cotton M.D."/>
            <person name="Roberts K.M."/>
            <person name="Hurst M.A."/>
            <person name="Kaine B.P."/>
            <person name="Borodovsky M."/>
            <person name="Klenk H.-P."/>
            <person name="Fraser C.M."/>
            <person name="Smith H.O."/>
            <person name="Woese C.R."/>
            <person name="Venter J.C."/>
        </authorList>
    </citation>
    <scope>NUCLEOTIDE SEQUENCE [LARGE SCALE GENOMIC DNA]</scope>
    <source>
        <strain>ATCC 43067 / DSM 2661 / JAL-1 / JCM 10045 / NBRC 100440</strain>
    </source>
</reference>
<organism>
    <name type="scientific">Methanocaldococcus jannaschii (strain ATCC 43067 / DSM 2661 / JAL-1 / JCM 10045 / NBRC 100440)</name>
    <name type="common">Methanococcus jannaschii</name>
    <dbReference type="NCBI Taxonomy" id="243232"/>
    <lineage>
        <taxon>Archaea</taxon>
        <taxon>Methanobacteriati</taxon>
        <taxon>Methanobacteriota</taxon>
        <taxon>Methanomada group</taxon>
        <taxon>Methanococci</taxon>
        <taxon>Methanococcales</taxon>
        <taxon>Methanocaldococcaceae</taxon>
        <taxon>Methanocaldococcus</taxon>
    </lineage>
</organism>
<proteinExistence type="inferred from homology"/>
<name>LHRC_METJA</name>
<protein>
    <recommendedName>
        <fullName>ATP-dependent helicase Lhr-Core</fullName>
        <ecNumber evidence="3">5.6.2.4</ecNumber>
    </recommendedName>
    <alternativeName>
        <fullName evidence="6">DNA 3'-5' helicase Lhr-Core</fullName>
    </alternativeName>
</protein>
<accession>Q57742</accession>
<evidence type="ECO:0000250" key="1">
    <source>
        <dbReference type="UniProtKB" id="A0QT91"/>
    </source>
</evidence>
<evidence type="ECO:0000250" key="2">
    <source>
        <dbReference type="UniProtKB" id="F0LJX3"/>
    </source>
</evidence>
<evidence type="ECO:0000250" key="3">
    <source>
        <dbReference type="UniProtKB" id="O27830"/>
    </source>
</evidence>
<evidence type="ECO:0000255" key="4">
    <source>
        <dbReference type="PROSITE-ProRule" id="PRU00541"/>
    </source>
</evidence>
<evidence type="ECO:0000255" key="5">
    <source>
        <dbReference type="PROSITE-ProRule" id="PRU00542"/>
    </source>
</evidence>
<evidence type="ECO:0000305" key="6"/>